<sequence>MSQDLFNVPIFFILFRETTEAAIIISVLLSFLKRMFNTESPVYKRLRNQVWIGGAAGLFICLCIGAAFIAVYYTVLNDLWGNSEDIWEGVFSLVAVIMITAMGLAMLKTERMQEKWKVKLAKAMQKSNSEKSSFKEKLQKYAFFVLPFITVLREGLEAVVFIGGVSLGIQGKSIPIAAIMGIICGCLVGFLIYRGGSLIQLRWFFVFSTVVLYLVAAGLMAKGVGYLEQNAWNQVIGGEAADVISYRVSTAVWHVSWGDPEANNDTSGGWQIFNAILGWNNTATYGSIISYCLYWLFVCCYLVFSYFKEKRAAIRKAEAGEWDDGDEALENAKQYIGNDGEFIVEDKESDEEANNHPKEKIESDAIKA</sequence>
<evidence type="ECO:0000255" key="1"/>
<evidence type="ECO:0000256" key="2">
    <source>
        <dbReference type="SAM" id="MobiDB-lite"/>
    </source>
</evidence>
<evidence type="ECO:0000269" key="3">
    <source>
    </source>
</evidence>
<evidence type="ECO:0000269" key="4">
    <source>
    </source>
</evidence>
<evidence type="ECO:0000269" key="5">
    <source>
    </source>
</evidence>
<evidence type="ECO:0000269" key="6">
    <source>
    </source>
</evidence>
<evidence type="ECO:0000303" key="7">
    <source>
    </source>
</evidence>
<evidence type="ECO:0000305" key="8"/>
<proteinExistence type="evidence at protein level"/>
<dbReference type="EMBL" id="AY344587">
    <property type="protein sequence ID" value="AAQ24109.1"/>
    <property type="molecule type" value="Genomic_DNA"/>
</dbReference>
<dbReference type="EMBL" id="CH476733">
    <property type="protein sequence ID" value="EIE78766.1"/>
    <property type="molecule type" value="Genomic_DNA"/>
</dbReference>
<dbReference type="FunCoup" id="I1BRD6">
    <property type="interactions" value="76"/>
</dbReference>
<dbReference type="STRING" id="246409.I1BRD6"/>
<dbReference type="VEuPathDB" id="FungiDB:RO3G_03471"/>
<dbReference type="eggNOG" id="ENOG502QQWE">
    <property type="taxonomic scope" value="Eukaryota"/>
</dbReference>
<dbReference type="InParanoid" id="I1BRD6"/>
<dbReference type="OMA" id="SVWHLDC"/>
<dbReference type="OrthoDB" id="59904at4827"/>
<dbReference type="PHI-base" id="PHI:4844"/>
<dbReference type="Proteomes" id="UP000009138">
    <property type="component" value="Unassembled WGS sequence"/>
</dbReference>
<dbReference type="GO" id="GO:0033573">
    <property type="term" value="C:high-affinity iron permease complex"/>
    <property type="evidence" value="ECO:0007669"/>
    <property type="project" value="EnsemblFungi"/>
</dbReference>
<dbReference type="GO" id="GO:0061840">
    <property type="term" value="F:high-affinity ferrous iron transmembrane transporter activity"/>
    <property type="evidence" value="ECO:0007669"/>
    <property type="project" value="EnsemblFungi"/>
</dbReference>
<dbReference type="GO" id="GO:0033215">
    <property type="term" value="P:reductive iron assimilation"/>
    <property type="evidence" value="ECO:0007669"/>
    <property type="project" value="EnsemblFungi"/>
</dbReference>
<dbReference type="InterPro" id="IPR004923">
    <property type="entry name" value="FTR1/Fip1/EfeU"/>
</dbReference>
<dbReference type="PANTHER" id="PTHR31632">
    <property type="entry name" value="IRON TRANSPORTER FTH1"/>
    <property type="match status" value="1"/>
</dbReference>
<dbReference type="PANTHER" id="PTHR31632:SF2">
    <property type="entry name" value="PLASMA MEMBRANE IRON PERMEASE"/>
    <property type="match status" value="1"/>
</dbReference>
<dbReference type="Pfam" id="PF03239">
    <property type="entry name" value="FTR1"/>
    <property type="match status" value="1"/>
</dbReference>
<organism>
    <name type="scientific">Rhizopus delemar (strain RA 99-880 / ATCC MYA-4621 / FGSC 9543 / NRRL 43880)</name>
    <name type="common">Mucormycosis agent</name>
    <name type="synonym">Rhizopus arrhizus var. delemar</name>
    <dbReference type="NCBI Taxonomy" id="246409"/>
    <lineage>
        <taxon>Eukaryota</taxon>
        <taxon>Fungi</taxon>
        <taxon>Fungi incertae sedis</taxon>
        <taxon>Mucoromycota</taxon>
        <taxon>Mucoromycotina</taxon>
        <taxon>Mucoromycetes</taxon>
        <taxon>Mucorales</taxon>
        <taxon>Mucorineae</taxon>
        <taxon>Rhizopodaceae</taxon>
        <taxon>Rhizopus</taxon>
    </lineage>
</organism>
<protein>
    <recommendedName>
        <fullName evidence="7">High affinity iron permease 1</fullName>
    </recommendedName>
</protein>
<accession>I1BRD6</accession>
<accession>Q6VB93</accession>
<comment type="function">
    <text evidence="3 4">High affinity iron permease required for iron uptake in iron-depleted environments (PubMed:15158278, PubMed:20545847). Required for full virulence in mice (PubMed:20545847).</text>
</comment>
<comment type="subcellular location">
    <subcellularLocation>
        <location evidence="8">Cell membrane</location>
        <topology evidence="1">Multi-pass membrane protein</topology>
    </subcellularLocation>
</comment>
<comment type="induction">
    <text evidence="3 4 6">Expressed in iron-depleted conditions and repressed in iron-replete media (PubMed:15158278, PubMed:28610916). Induced during infection in diabetic ketoacidosis (DKA) mice (PubMed:20545847).</text>
</comment>
<comment type="disruption phenotype">
    <text evidence="4 5">Compromises the ability to acquire iron in vitro and reduced virulence in diabetic ketoacidosis (DKA) mice (PubMed:20545847). RNAi-mediated knockdown decreases virulence in a mouse model of 3-hydroxybutyric acid (BHB)-induced acidosis (PubMed:27159390).</text>
</comment>
<comment type="biotechnology">
    <text evidence="4">Passive immunization with anti-ftr1 immune sera protects DKA mice from infection (PubMed:20545847). Thus, ftr1 is a virulence factor and anti-ftr1 passive immunotherapy deserves further evaluation as a strategy to improve outcomes of deadly mucormycosis (PubMed:20545847).</text>
</comment>
<comment type="similarity">
    <text evidence="8">Belongs to the oxidase-dependent Fe transporter (OFeT) (TC 9.A.10.1) family.</text>
</comment>
<feature type="chain" id="PRO_0000444440" description="High affinity iron permease 1">
    <location>
        <begin position="1"/>
        <end position="368"/>
    </location>
</feature>
<feature type="transmembrane region" description="Helical" evidence="1">
    <location>
        <begin position="8"/>
        <end position="28"/>
    </location>
</feature>
<feature type="transmembrane region" description="Helical" evidence="1">
    <location>
        <begin position="50"/>
        <end position="70"/>
    </location>
</feature>
<feature type="transmembrane region" description="Helical" evidence="1">
    <location>
        <begin position="86"/>
        <end position="106"/>
    </location>
</feature>
<feature type="transmembrane region" description="Helical" evidence="1">
    <location>
        <begin position="142"/>
        <end position="162"/>
    </location>
</feature>
<feature type="transmembrane region" description="Helical" evidence="1">
    <location>
        <begin position="173"/>
        <end position="193"/>
    </location>
</feature>
<feature type="transmembrane region" description="Helical" evidence="1">
    <location>
        <begin position="204"/>
        <end position="224"/>
    </location>
</feature>
<feature type="transmembrane region" description="Helical" evidence="1">
    <location>
        <begin position="287"/>
        <end position="307"/>
    </location>
</feature>
<feature type="region of interest" description="Disordered" evidence="2">
    <location>
        <begin position="346"/>
        <end position="368"/>
    </location>
</feature>
<feature type="compositionally biased region" description="Basic and acidic residues" evidence="2">
    <location>
        <begin position="353"/>
        <end position="368"/>
    </location>
</feature>
<keyword id="KW-1003">Cell membrane</keyword>
<keyword id="KW-0406">Ion transport</keyword>
<keyword id="KW-0408">Iron</keyword>
<keyword id="KW-0410">Iron transport</keyword>
<keyword id="KW-0472">Membrane</keyword>
<keyword id="KW-1185">Reference proteome</keyword>
<keyword id="KW-0812">Transmembrane</keyword>
<keyword id="KW-1133">Transmembrane helix</keyword>
<keyword id="KW-0813">Transport</keyword>
<keyword id="KW-0843">Virulence</keyword>
<reference key="1">
    <citation type="journal article" date="2004" name="FEMS Microbiol. Lett.">
        <title>Cloning and functional characterization of the Rhizopus oryzae high affinity iron permease (rFTR1) gene.</title>
        <authorList>
            <person name="Fu Y."/>
            <person name="Lee H."/>
            <person name="Collins M."/>
            <person name="Tsai H.F."/>
            <person name="Spellberg B."/>
            <person name="Edwards J.E. Jr."/>
            <person name="Kwon-Chung K.J."/>
            <person name="Ibrahim A.S."/>
        </authorList>
    </citation>
    <scope>NUCLEOTIDE SEQUENCE [GENOMIC DNA]</scope>
    <scope>FUNCTION</scope>
    <scope>INDUCTION</scope>
</reference>
<reference key="2">
    <citation type="journal article" date="2009" name="PLoS Genet.">
        <title>Genomic analysis of the basal lineage fungus Rhizopus oryzae reveals a whole-genome duplication.</title>
        <authorList>
            <person name="Ma L.-J."/>
            <person name="Ibrahim A.S."/>
            <person name="Skory C."/>
            <person name="Grabherr M.G."/>
            <person name="Burger G."/>
            <person name="Butler M."/>
            <person name="Elias M."/>
            <person name="Idnurm A."/>
            <person name="Lang B.F."/>
            <person name="Sone T."/>
            <person name="Abe A."/>
            <person name="Calvo S.E."/>
            <person name="Corrochano L.M."/>
            <person name="Engels R."/>
            <person name="Fu J."/>
            <person name="Hansberg W."/>
            <person name="Kim J.-M."/>
            <person name="Kodira C.D."/>
            <person name="Koehrsen M.J."/>
            <person name="Liu B."/>
            <person name="Miranda-Saavedra D."/>
            <person name="O'Leary S."/>
            <person name="Ortiz-Castellanos L."/>
            <person name="Poulter R."/>
            <person name="Rodriguez-Romero J."/>
            <person name="Ruiz-Herrera J."/>
            <person name="Shen Y.-Q."/>
            <person name="Zeng Q."/>
            <person name="Galagan J."/>
            <person name="Birren B.W."/>
            <person name="Cuomo C.A."/>
            <person name="Wickes B.L."/>
        </authorList>
    </citation>
    <scope>NUCLEOTIDE SEQUENCE [LARGE SCALE GENOMIC DNA]</scope>
    <source>
        <strain>RA 99-880 / ATCC MYA-4621 / FGSC 9543 / NRRL 43880</strain>
    </source>
</reference>
<reference key="3">
    <citation type="journal article" date="2010" name="Mol. Microbiol.">
        <title>The high affinity iron permease is a key virulence factor required for Rhizopus oryzae pathogenesis.</title>
        <authorList>
            <person name="Ibrahim A.S."/>
            <person name="Gebremariam T."/>
            <person name="Lin L."/>
            <person name="Luo G."/>
            <person name="Husseiny M.I."/>
            <person name="Skory C.D."/>
            <person name="Fu Y."/>
            <person name="French S.W."/>
            <person name="Edwards J.E. Jr."/>
            <person name="Spellberg B."/>
        </authorList>
    </citation>
    <scope>FUNCTION</scope>
    <scope>INDUCTION</scope>
    <scope>DISRUPTION PHENOTYPE</scope>
    <scope>BIOTECHNOLOGY</scope>
</reference>
<reference key="4">
    <citation type="journal article" date="2016" name="J. Clin. Invest.">
        <title>Bicarbonate correction of ketoacidosis alters host-pathogen interactions and alleviates mucormycosis.</title>
        <authorList>
            <person name="Gebremariam T."/>
            <person name="Lin L."/>
            <person name="Liu M."/>
            <person name="Kontoyiannis D.P."/>
            <person name="French S."/>
            <person name="Edwards J.E. Jr."/>
            <person name="Filler S.G."/>
            <person name="Ibrahim A.S."/>
        </authorList>
    </citation>
    <scope>DISRUPTION PHENOTYPE</scope>
</reference>
<reference key="5">
    <citation type="journal article" date="2017" name="Int. J. Biochem. Cell Biol.">
        <title>The rhizoferrin biosynthetic gene in the fungal pathogen Rhizopus delemar is a novel member of the NIS gene family.</title>
        <authorList>
            <person name="Carroll C.S."/>
            <person name="Grieve C.L."/>
            <person name="Murugathasan I."/>
            <person name="Bennet A.J."/>
            <person name="Czekster C.M."/>
            <person name="Liu H."/>
            <person name="Naismith J."/>
            <person name="Moore M.M."/>
        </authorList>
    </citation>
    <scope>INDUCTION</scope>
</reference>
<name>FTR1_RHIO9</name>
<gene>
    <name evidence="7" type="primary">ftr1</name>
    <name type="ORF">RO3G_03471</name>
</gene>